<gene>
    <name evidence="1" type="primary">rplO</name>
    <name type="ordered locus">Strop_3904</name>
</gene>
<comment type="function">
    <text evidence="1">Binds to the 23S rRNA.</text>
</comment>
<comment type="subunit">
    <text evidence="1">Part of the 50S ribosomal subunit.</text>
</comment>
<comment type="similarity">
    <text evidence="1">Belongs to the universal ribosomal protein uL15 family.</text>
</comment>
<proteinExistence type="inferred from homology"/>
<evidence type="ECO:0000255" key="1">
    <source>
        <dbReference type="HAMAP-Rule" id="MF_01341"/>
    </source>
</evidence>
<evidence type="ECO:0000256" key="2">
    <source>
        <dbReference type="SAM" id="MobiDB-lite"/>
    </source>
</evidence>
<evidence type="ECO:0000305" key="3"/>
<accession>A4XBM7</accession>
<keyword id="KW-1185">Reference proteome</keyword>
<keyword id="KW-0687">Ribonucleoprotein</keyword>
<keyword id="KW-0689">Ribosomal protein</keyword>
<keyword id="KW-0694">RNA-binding</keyword>
<keyword id="KW-0699">rRNA-binding</keyword>
<reference key="1">
    <citation type="journal article" date="2007" name="Proc. Natl. Acad. Sci. U.S.A.">
        <title>Genome sequencing reveals complex secondary metabolome in the marine actinomycete Salinispora tropica.</title>
        <authorList>
            <person name="Udwary D.W."/>
            <person name="Zeigler L."/>
            <person name="Asolkar R.N."/>
            <person name="Singan V."/>
            <person name="Lapidus A."/>
            <person name="Fenical W."/>
            <person name="Jensen P.R."/>
            <person name="Moore B.S."/>
        </authorList>
    </citation>
    <scope>NUCLEOTIDE SEQUENCE [LARGE SCALE GENOMIC DNA]</scope>
    <source>
        <strain>ATCC BAA-916 / DSM 44818 / JCM 13857 / NBRC 105044 / CNB-440</strain>
    </source>
</reference>
<organism>
    <name type="scientific">Salinispora tropica (strain ATCC BAA-916 / DSM 44818 / JCM 13857 / NBRC 105044 / CNB-440)</name>
    <dbReference type="NCBI Taxonomy" id="369723"/>
    <lineage>
        <taxon>Bacteria</taxon>
        <taxon>Bacillati</taxon>
        <taxon>Actinomycetota</taxon>
        <taxon>Actinomycetes</taxon>
        <taxon>Micromonosporales</taxon>
        <taxon>Micromonosporaceae</taxon>
        <taxon>Salinispora</taxon>
    </lineage>
</organism>
<sequence>MTIKVHHLRPAPGAKTTKTRVGRGEGSKGKTAGRGTKGSKARKNISAAFEGGQMPIHMRLPKMKGFKNKFKVTFQVVNLERLAELFPNGGQVGPAELVDAGAVRKGQPVKVLGTGDLGGVTLQVSAHAFSASAKEKITAAGGSITEL</sequence>
<feature type="chain" id="PRO_1000086729" description="Large ribosomal subunit protein uL15">
    <location>
        <begin position="1"/>
        <end position="147"/>
    </location>
</feature>
<feature type="region of interest" description="Disordered" evidence="2">
    <location>
        <begin position="1"/>
        <end position="42"/>
    </location>
</feature>
<name>RL15_SALTO</name>
<dbReference type="EMBL" id="CP000667">
    <property type="protein sequence ID" value="ABP56334.1"/>
    <property type="molecule type" value="Genomic_DNA"/>
</dbReference>
<dbReference type="RefSeq" id="WP_012015109.1">
    <property type="nucleotide sequence ID" value="NC_009380.1"/>
</dbReference>
<dbReference type="SMR" id="A4XBM7"/>
<dbReference type="STRING" id="369723.Strop_3904"/>
<dbReference type="KEGG" id="stp:Strop_3904"/>
<dbReference type="PATRIC" id="fig|369723.5.peg.4030"/>
<dbReference type="eggNOG" id="COG0200">
    <property type="taxonomic scope" value="Bacteria"/>
</dbReference>
<dbReference type="HOGENOM" id="CLU_055188_4_1_11"/>
<dbReference type="Proteomes" id="UP000000235">
    <property type="component" value="Chromosome"/>
</dbReference>
<dbReference type="GO" id="GO:0022625">
    <property type="term" value="C:cytosolic large ribosomal subunit"/>
    <property type="evidence" value="ECO:0007669"/>
    <property type="project" value="TreeGrafter"/>
</dbReference>
<dbReference type="GO" id="GO:0019843">
    <property type="term" value="F:rRNA binding"/>
    <property type="evidence" value="ECO:0007669"/>
    <property type="project" value="UniProtKB-UniRule"/>
</dbReference>
<dbReference type="GO" id="GO:0003735">
    <property type="term" value="F:structural constituent of ribosome"/>
    <property type="evidence" value="ECO:0007669"/>
    <property type="project" value="InterPro"/>
</dbReference>
<dbReference type="GO" id="GO:0006412">
    <property type="term" value="P:translation"/>
    <property type="evidence" value="ECO:0007669"/>
    <property type="project" value="UniProtKB-UniRule"/>
</dbReference>
<dbReference type="FunFam" id="3.100.10.10:FF:000005">
    <property type="entry name" value="50S ribosomal protein L15"/>
    <property type="match status" value="1"/>
</dbReference>
<dbReference type="Gene3D" id="3.100.10.10">
    <property type="match status" value="1"/>
</dbReference>
<dbReference type="HAMAP" id="MF_01341">
    <property type="entry name" value="Ribosomal_uL15"/>
    <property type="match status" value="1"/>
</dbReference>
<dbReference type="InterPro" id="IPR030878">
    <property type="entry name" value="Ribosomal_uL15"/>
</dbReference>
<dbReference type="InterPro" id="IPR021131">
    <property type="entry name" value="Ribosomal_uL15/eL18"/>
</dbReference>
<dbReference type="InterPro" id="IPR036227">
    <property type="entry name" value="Ribosomal_uL15/eL18_sf"/>
</dbReference>
<dbReference type="InterPro" id="IPR005749">
    <property type="entry name" value="Ribosomal_uL15_bac-type"/>
</dbReference>
<dbReference type="InterPro" id="IPR001196">
    <property type="entry name" value="Ribosomal_uL15_CS"/>
</dbReference>
<dbReference type="NCBIfam" id="TIGR01071">
    <property type="entry name" value="rplO_bact"/>
    <property type="match status" value="1"/>
</dbReference>
<dbReference type="PANTHER" id="PTHR12934">
    <property type="entry name" value="50S RIBOSOMAL PROTEIN L15"/>
    <property type="match status" value="1"/>
</dbReference>
<dbReference type="PANTHER" id="PTHR12934:SF11">
    <property type="entry name" value="LARGE RIBOSOMAL SUBUNIT PROTEIN UL15M"/>
    <property type="match status" value="1"/>
</dbReference>
<dbReference type="Pfam" id="PF00828">
    <property type="entry name" value="Ribosomal_L27A"/>
    <property type="match status" value="1"/>
</dbReference>
<dbReference type="SUPFAM" id="SSF52080">
    <property type="entry name" value="Ribosomal proteins L15p and L18e"/>
    <property type="match status" value="1"/>
</dbReference>
<dbReference type="PROSITE" id="PS00475">
    <property type="entry name" value="RIBOSOMAL_L15"/>
    <property type="match status" value="1"/>
</dbReference>
<protein>
    <recommendedName>
        <fullName evidence="1">Large ribosomal subunit protein uL15</fullName>
    </recommendedName>
    <alternativeName>
        <fullName evidence="3">50S ribosomal protein L15</fullName>
    </alternativeName>
</protein>